<gene>
    <name evidence="1" type="primary">mutS</name>
    <name type="ordered locus">Jann_0209</name>
</gene>
<feature type="chain" id="PRO_0000335169" description="DNA mismatch repair protein MutS">
    <location>
        <begin position="1"/>
        <end position="877"/>
    </location>
</feature>
<feature type="binding site" evidence="1">
    <location>
        <begin position="630"/>
        <end position="637"/>
    </location>
    <ligand>
        <name>ATP</name>
        <dbReference type="ChEBI" id="CHEBI:30616"/>
    </ligand>
</feature>
<protein>
    <recommendedName>
        <fullName evidence="1">DNA mismatch repair protein MutS</fullName>
    </recommendedName>
</protein>
<dbReference type="EMBL" id="CP000264">
    <property type="protein sequence ID" value="ABD53126.1"/>
    <property type="molecule type" value="Genomic_DNA"/>
</dbReference>
<dbReference type="RefSeq" id="WP_011453335.1">
    <property type="nucleotide sequence ID" value="NC_007802.1"/>
</dbReference>
<dbReference type="SMR" id="Q28VY6"/>
<dbReference type="STRING" id="290400.Jann_0209"/>
<dbReference type="KEGG" id="jan:Jann_0209"/>
<dbReference type="eggNOG" id="COG0249">
    <property type="taxonomic scope" value="Bacteria"/>
</dbReference>
<dbReference type="HOGENOM" id="CLU_002472_4_0_5"/>
<dbReference type="OrthoDB" id="9802448at2"/>
<dbReference type="Proteomes" id="UP000008326">
    <property type="component" value="Chromosome"/>
</dbReference>
<dbReference type="GO" id="GO:0005829">
    <property type="term" value="C:cytosol"/>
    <property type="evidence" value="ECO:0007669"/>
    <property type="project" value="TreeGrafter"/>
</dbReference>
<dbReference type="GO" id="GO:0005524">
    <property type="term" value="F:ATP binding"/>
    <property type="evidence" value="ECO:0007669"/>
    <property type="project" value="UniProtKB-UniRule"/>
</dbReference>
<dbReference type="GO" id="GO:0140664">
    <property type="term" value="F:ATP-dependent DNA damage sensor activity"/>
    <property type="evidence" value="ECO:0007669"/>
    <property type="project" value="InterPro"/>
</dbReference>
<dbReference type="GO" id="GO:0003684">
    <property type="term" value="F:damaged DNA binding"/>
    <property type="evidence" value="ECO:0007669"/>
    <property type="project" value="UniProtKB-UniRule"/>
</dbReference>
<dbReference type="GO" id="GO:0030983">
    <property type="term" value="F:mismatched DNA binding"/>
    <property type="evidence" value="ECO:0007669"/>
    <property type="project" value="InterPro"/>
</dbReference>
<dbReference type="GO" id="GO:0006298">
    <property type="term" value="P:mismatch repair"/>
    <property type="evidence" value="ECO:0007669"/>
    <property type="project" value="UniProtKB-UniRule"/>
</dbReference>
<dbReference type="CDD" id="cd03284">
    <property type="entry name" value="ABC_MutS1"/>
    <property type="match status" value="1"/>
</dbReference>
<dbReference type="FunFam" id="3.40.1170.10:FF:000001">
    <property type="entry name" value="DNA mismatch repair protein MutS"/>
    <property type="match status" value="1"/>
</dbReference>
<dbReference type="Gene3D" id="1.10.1420.10">
    <property type="match status" value="2"/>
</dbReference>
<dbReference type="Gene3D" id="6.10.140.430">
    <property type="match status" value="1"/>
</dbReference>
<dbReference type="Gene3D" id="3.40.1170.10">
    <property type="entry name" value="DNA repair protein MutS, domain I"/>
    <property type="match status" value="1"/>
</dbReference>
<dbReference type="Gene3D" id="3.30.420.110">
    <property type="entry name" value="MutS, connector domain"/>
    <property type="match status" value="1"/>
</dbReference>
<dbReference type="Gene3D" id="3.40.50.300">
    <property type="entry name" value="P-loop containing nucleotide triphosphate hydrolases"/>
    <property type="match status" value="1"/>
</dbReference>
<dbReference type="HAMAP" id="MF_00096">
    <property type="entry name" value="MutS"/>
    <property type="match status" value="1"/>
</dbReference>
<dbReference type="InterPro" id="IPR005748">
    <property type="entry name" value="DNA_mismatch_repair_MutS"/>
</dbReference>
<dbReference type="InterPro" id="IPR007695">
    <property type="entry name" value="DNA_mismatch_repair_MutS-lik_N"/>
</dbReference>
<dbReference type="InterPro" id="IPR017261">
    <property type="entry name" value="DNA_mismatch_repair_MutS/MSH"/>
</dbReference>
<dbReference type="InterPro" id="IPR000432">
    <property type="entry name" value="DNA_mismatch_repair_MutS_C"/>
</dbReference>
<dbReference type="InterPro" id="IPR007861">
    <property type="entry name" value="DNA_mismatch_repair_MutS_clamp"/>
</dbReference>
<dbReference type="InterPro" id="IPR007696">
    <property type="entry name" value="DNA_mismatch_repair_MutS_core"/>
</dbReference>
<dbReference type="InterPro" id="IPR016151">
    <property type="entry name" value="DNA_mismatch_repair_MutS_N"/>
</dbReference>
<dbReference type="InterPro" id="IPR036187">
    <property type="entry name" value="DNA_mismatch_repair_MutS_sf"/>
</dbReference>
<dbReference type="InterPro" id="IPR007860">
    <property type="entry name" value="DNA_mmatch_repair_MutS_con_dom"/>
</dbReference>
<dbReference type="InterPro" id="IPR045076">
    <property type="entry name" value="MutS"/>
</dbReference>
<dbReference type="InterPro" id="IPR036678">
    <property type="entry name" value="MutS_con_dom_sf"/>
</dbReference>
<dbReference type="InterPro" id="IPR027417">
    <property type="entry name" value="P-loop_NTPase"/>
</dbReference>
<dbReference type="NCBIfam" id="TIGR01070">
    <property type="entry name" value="mutS1"/>
    <property type="match status" value="1"/>
</dbReference>
<dbReference type="NCBIfam" id="NF003810">
    <property type="entry name" value="PRK05399.1"/>
    <property type="match status" value="1"/>
</dbReference>
<dbReference type="PANTHER" id="PTHR11361:SF34">
    <property type="entry name" value="DNA MISMATCH REPAIR PROTEIN MSH1, MITOCHONDRIAL"/>
    <property type="match status" value="1"/>
</dbReference>
<dbReference type="PANTHER" id="PTHR11361">
    <property type="entry name" value="DNA MISMATCH REPAIR PROTEIN MUTS FAMILY MEMBER"/>
    <property type="match status" value="1"/>
</dbReference>
<dbReference type="Pfam" id="PF01624">
    <property type="entry name" value="MutS_I"/>
    <property type="match status" value="1"/>
</dbReference>
<dbReference type="Pfam" id="PF05188">
    <property type="entry name" value="MutS_II"/>
    <property type="match status" value="1"/>
</dbReference>
<dbReference type="Pfam" id="PF05192">
    <property type="entry name" value="MutS_III"/>
    <property type="match status" value="1"/>
</dbReference>
<dbReference type="Pfam" id="PF05190">
    <property type="entry name" value="MutS_IV"/>
    <property type="match status" value="1"/>
</dbReference>
<dbReference type="Pfam" id="PF00488">
    <property type="entry name" value="MutS_V"/>
    <property type="match status" value="1"/>
</dbReference>
<dbReference type="PIRSF" id="PIRSF037677">
    <property type="entry name" value="DNA_mis_repair_Msh6"/>
    <property type="match status" value="1"/>
</dbReference>
<dbReference type="SMART" id="SM00534">
    <property type="entry name" value="MUTSac"/>
    <property type="match status" value="1"/>
</dbReference>
<dbReference type="SMART" id="SM00533">
    <property type="entry name" value="MUTSd"/>
    <property type="match status" value="1"/>
</dbReference>
<dbReference type="SUPFAM" id="SSF55271">
    <property type="entry name" value="DNA repair protein MutS, domain I"/>
    <property type="match status" value="1"/>
</dbReference>
<dbReference type="SUPFAM" id="SSF53150">
    <property type="entry name" value="DNA repair protein MutS, domain II"/>
    <property type="match status" value="1"/>
</dbReference>
<dbReference type="SUPFAM" id="SSF48334">
    <property type="entry name" value="DNA repair protein MutS, domain III"/>
    <property type="match status" value="1"/>
</dbReference>
<dbReference type="SUPFAM" id="SSF52540">
    <property type="entry name" value="P-loop containing nucleoside triphosphate hydrolases"/>
    <property type="match status" value="1"/>
</dbReference>
<dbReference type="PROSITE" id="PS00486">
    <property type="entry name" value="DNA_MISMATCH_REPAIR_2"/>
    <property type="match status" value="1"/>
</dbReference>
<sequence length="877" mass="95179">MNAQVTPMMAQYLEIKAAHPDALLFYRMGDFYEMFFDDAVAAAEALDIALTKRGKHNGEDIAMCGVPAHSAESYLLTLIRKGFRVGICEQMEDPATAKKRGGSKAVVRREVVRLVTPGTLTEDTLLEARRHNYLASYADVRGEGALAWCDISTGDFRVMRCPAVRLGPELARLSPKEVLVSDGLDIARQDAIIELGAAVTPLSPGSFDSASAEQRLAGLFSVSTLEGFGNFARAEVSAMGALIDYLELTQKGALPLLRAPRQQSADRLLQLDTATRRNLELTQALSGGRANSLLSVLDRTQTAGGARLLQRRLTGPSTDLDVIRARHESVSFFFSDTLIRDDLEAELRRIPDLDRALSRLALDRGGPRDLSAIRDGLSGAARLSDKLKIVDLPPLLEGAVQDLQGHDELSALLDEALVAEPPVQLRDGGLIAPGYHAELDEARTLRDEGRSVIATMQADYVEATGVNALKIKHNNVLGYFIETTATHAEKMLNPPLSERFIHRQTTANQVRFTTVELSELETKILNAGNRALEIERVLFQSLRDAILNCQDQIGQAARGLAELDLSAALARRAREGDWTQPEMTEDRAFMIEGARHPVVEAALAKDGTSFVANDCDLSAEGGAAITLLTGPNMAGKSTYLRQNALLVIMAQTGSFVPAKCAKIGLVSQVFSRVGASDDLARGRSTFMVEMVETATILNQADDRALVILDEIGRGTATYDGLSIAWATLEHLHETNQCRALFATHYHEMTSLASKLDGLTNATVAVKEWEGEVIFLHEVREGAADRSYGVQVAKLAGLPDAVIARAQVVLDALEKGEREGGERKAVIDDLPLFAMMPAPAPAPSAPSLVEEKLRAVHPDEMTAREALNLLYELKAELS</sequence>
<organism>
    <name type="scientific">Jannaschia sp. (strain CCS1)</name>
    <dbReference type="NCBI Taxonomy" id="290400"/>
    <lineage>
        <taxon>Bacteria</taxon>
        <taxon>Pseudomonadati</taxon>
        <taxon>Pseudomonadota</taxon>
        <taxon>Alphaproteobacteria</taxon>
        <taxon>Rhodobacterales</taxon>
        <taxon>Roseobacteraceae</taxon>
        <taxon>Jannaschia</taxon>
    </lineage>
</organism>
<keyword id="KW-0067">ATP-binding</keyword>
<keyword id="KW-0227">DNA damage</keyword>
<keyword id="KW-0234">DNA repair</keyword>
<keyword id="KW-0238">DNA-binding</keyword>
<keyword id="KW-0547">Nucleotide-binding</keyword>
<keyword id="KW-1185">Reference proteome</keyword>
<name>MUTS_JANSC</name>
<evidence type="ECO:0000255" key="1">
    <source>
        <dbReference type="HAMAP-Rule" id="MF_00096"/>
    </source>
</evidence>
<comment type="function">
    <text evidence="1">This protein is involved in the repair of mismatches in DNA. It is possible that it carries out the mismatch recognition step. This protein has a weak ATPase activity.</text>
</comment>
<comment type="similarity">
    <text evidence="1">Belongs to the DNA mismatch repair MutS family.</text>
</comment>
<proteinExistence type="inferred from homology"/>
<accession>Q28VY6</accession>
<reference key="1">
    <citation type="submission" date="2006-02" db="EMBL/GenBank/DDBJ databases">
        <title>Complete sequence of chromosome of Jannaschia sp. CCS1.</title>
        <authorList>
            <consortium name="US DOE Joint Genome Institute"/>
            <person name="Copeland A."/>
            <person name="Lucas S."/>
            <person name="Lapidus A."/>
            <person name="Barry K."/>
            <person name="Detter J.C."/>
            <person name="Glavina del Rio T."/>
            <person name="Hammon N."/>
            <person name="Israni S."/>
            <person name="Pitluck S."/>
            <person name="Brettin T."/>
            <person name="Bruce D."/>
            <person name="Han C."/>
            <person name="Tapia R."/>
            <person name="Gilna P."/>
            <person name="Chertkov O."/>
            <person name="Saunders E."/>
            <person name="Schmutz J."/>
            <person name="Larimer F."/>
            <person name="Land M."/>
            <person name="Kyrpides N."/>
            <person name="Lykidis A."/>
            <person name="Moran M.A."/>
            <person name="Belas R."/>
            <person name="Ye W."/>
            <person name="Buchan A."/>
            <person name="Gonzalez J.M."/>
            <person name="Schell M.A."/>
            <person name="Richardson P."/>
        </authorList>
    </citation>
    <scope>NUCLEOTIDE SEQUENCE [LARGE SCALE GENOMIC DNA]</scope>
    <source>
        <strain>CCS1</strain>
    </source>
</reference>